<accession>Q9LHT0</accession>
<accession>Q8LFZ4</accession>
<keyword id="KW-0521">NADP</keyword>
<keyword id="KW-0560">Oxidoreductase</keyword>
<keyword id="KW-1185">Reference proteome</keyword>
<comment type="similarity">
    <text evidence="3">Belongs to the short-chain dehydrogenases/reductases (SDR) family. SDR65C subfamily.</text>
</comment>
<sequence length="264" mass="28292">METDKRWSLAGKTALVTGGTRGIGRAVVEELAKFGAKVHTCSRNQEELNACLNDWKANGLVVSGSVCDASVRDQREKLIQEASSAFSGKLNILINNVGTNVRKPTVEYSSEEYAKIMSTNLESAFHLSQIAHPLLKASGVGSIVFISSVAGLVHLSSGSIYGATKGALNQLTRNLACEWASDNIRTNCVAPWYIKTSLVETLLEKKEFVEAVVSRTPLGRVGEPEEVSSLVAFLCLPASSYITGQVISVDGGFTVNGFSYAMKP</sequence>
<feature type="chain" id="PRO_0000432370" description="Tropinone reductase homolog At5g06060">
    <location>
        <begin position="1"/>
        <end position="264"/>
    </location>
</feature>
<feature type="active site" description="Proton acceptor" evidence="2">
    <location>
        <position position="161"/>
    </location>
</feature>
<feature type="binding site" evidence="1">
    <location>
        <begin position="15"/>
        <end position="39"/>
    </location>
    <ligand>
        <name>NADP(+)</name>
        <dbReference type="ChEBI" id="CHEBI:58349"/>
    </ligand>
</feature>
<feature type="binding site" evidence="1">
    <location>
        <position position="148"/>
    </location>
    <ligand>
        <name>substrate</name>
    </ligand>
</feature>
<feature type="sequence conflict" description="In Ref. 4; AAM61117." evidence="3" ref="4">
    <original>G</original>
    <variation>C</variation>
    <location>
        <position position="35"/>
    </location>
</feature>
<organism evidence="5">
    <name type="scientific">Arabidopsis thaliana</name>
    <name type="common">Mouse-ear cress</name>
    <dbReference type="NCBI Taxonomy" id="3702"/>
    <lineage>
        <taxon>Eukaryota</taxon>
        <taxon>Viridiplantae</taxon>
        <taxon>Streptophyta</taxon>
        <taxon>Embryophyta</taxon>
        <taxon>Tracheophyta</taxon>
        <taxon>Spermatophyta</taxon>
        <taxon>Magnoliopsida</taxon>
        <taxon>eudicotyledons</taxon>
        <taxon>Gunneridae</taxon>
        <taxon>Pentapetalae</taxon>
        <taxon>rosids</taxon>
        <taxon>malvids</taxon>
        <taxon>Brassicales</taxon>
        <taxon>Brassicaceae</taxon>
        <taxon>Camelineae</taxon>
        <taxon>Arabidopsis</taxon>
    </lineage>
</organism>
<proteinExistence type="evidence at transcript level"/>
<protein>
    <recommendedName>
        <fullName evidence="3">Tropinone reductase homolog At5g06060</fullName>
        <ecNumber evidence="3">1.1.1.-</ecNumber>
    </recommendedName>
</protein>
<evidence type="ECO:0000250" key="1">
    <source>
        <dbReference type="UniProtKB" id="P50162"/>
    </source>
</evidence>
<evidence type="ECO:0000255" key="2">
    <source>
        <dbReference type="PROSITE-ProRule" id="PRU10001"/>
    </source>
</evidence>
<evidence type="ECO:0000305" key="3"/>
<evidence type="ECO:0000312" key="4">
    <source>
        <dbReference type="Araport" id="AT5G06060"/>
    </source>
</evidence>
<evidence type="ECO:0000312" key="5">
    <source>
        <dbReference type="EMBL" id="BAA98195.1"/>
    </source>
</evidence>
<name>TRNHF_ARATH</name>
<dbReference type="EC" id="1.1.1.-" evidence="3"/>
<dbReference type="EMBL" id="AP002030">
    <property type="protein sequence ID" value="BAA98195.1"/>
    <property type="molecule type" value="Genomic_DNA"/>
</dbReference>
<dbReference type="EMBL" id="CP002688">
    <property type="protein sequence ID" value="AED90960.1"/>
    <property type="molecule type" value="Genomic_DNA"/>
</dbReference>
<dbReference type="EMBL" id="BT002894">
    <property type="protein sequence ID" value="AAO22710.1"/>
    <property type="molecule type" value="mRNA"/>
</dbReference>
<dbReference type="EMBL" id="BT004454">
    <property type="protein sequence ID" value="AAO42448.1"/>
    <property type="molecule type" value="mRNA"/>
</dbReference>
<dbReference type="EMBL" id="AY084550">
    <property type="protein sequence ID" value="AAM61117.1"/>
    <property type="molecule type" value="mRNA"/>
</dbReference>
<dbReference type="RefSeq" id="NP_196225.1">
    <property type="nucleotide sequence ID" value="NM_120688.3"/>
</dbReference>
<dbReference type="SMR" id="Q9LHT0"/>
<dbReference type="FunCoup" id="Q9LHT0">
    <property type="interactions" value="627"/>
</dbReference>
<dbReference type="IntAct" id="Q9LHT0">
    <property type="interactions" value="4"/>
</dbReference>
<dbReference type="STRING" id="3702.Q9LHT0"/>
<dbReference type="PaxDb" id="3702-AT5G06060.1"/>
<dbReference type="ProteomicsDB" id="232447"/>
<dbReference type="EnsemblPlants" id="AT5G06060.1">
    <property type="protein sequence ID" value="AT5G06060.1"/>
    <property type="gene ID" value="AT5G06060"/>
</dbReference>
<dbReference type="GeneID" id="830493"/>
<dbReference type="Gramene" id="AT5G06060.1">
    <property type="protein sequence ID" value="AT5G06060.1"/>
    <property type="gene ID" value="AT5G06060"/>
</dbReference>
<dbReference type="KEGG" id="ath:AT5G06060"/>
<dbReference type="Araport" id="AT5G06060"/>
<dbReference type="TAIR" id="AT5G06060"/>
<dbReference type="eggNOG" id="KOG0725">
    <property type="taxonomic scope" value="Eukaryota"/>
</dbReference>
<dbReference type="HOGENOM" id="CLU_010194_1_1_1"/>
<dbReference type="InParanoid" id="Q9LHT0"/>
<dbReference type="OMA" id="NSLACGP"/>
<dbReference type="OrthoDB" id="417891at2759"/>
<dbReference type="PhylomeDB" id="Q9LHT0"/>
<dbReference type="BioCyc" id="ARA:AT5G06060-MONOMER"/>
<dbReference type="PRO" id="PR:Q9LHT0"/>
<dbReference type="Proteomes" id="UP000006548">
    <property type="component" value="Chromosome 5"/>
</dbReference>
<dbReference type="ExpressionAtlas" id="Q9LHT0">
    <property type="expression patterns" value="baseline and differential"/>
</dbReference>
<dbReference type="GO" id="GO:0005886">
    <property type="term" value="C:plasma membrane"/>
    <property type="evidence" value="ECO:0007005"/>
    <property type="project" value="TAIR"/>
</dbReference>
<dbReference type="GO" id="GO:0016491">
    <property type="term" value="F:oxidoreductase activity"/>
    <property type="evidence" value="ECO:0007669"/>
    <property type="project" value="UniProtKB-KW"/>
</dbReference>
<dbReference type="CDD" id="cd05329">
    <property type="entry name" value="TR_SDR_c"/>
    <property type="match status" value="1"/>
</dbReference>
<dbReference type="FunFam" id="3.40.50.720:FF:000084">
    <property type="entry name" value="Short-chain dehydrogenase reductase"/>
    <property type="match status" value="1"/>
</dbReference>
<dbReference type="Gene3D" id="3.40.50.720">
    <property type="entry name" value="NAD(P)-binding Rossmann-like Domain"/>
    <property type="match status" value="1"/>
</dbReference>
<dbReference type="InterPro" id="IPR036291">
    <property type="entry name" value="NAD(P)-bd_dom_sf"/>
</dbReference>
<dbReference type="InterPro" id="IPR020904">
    <property type="entry name" value="Sc_DH/Rdtase_CS"/>
</dbReference>
<dbReference type="InterPro" id="IPR002347">
    <property type="entry name" value="SDR_fam"/>
</dbReference>
<dbReference type="InterPro" id="IPR045000">
    <property type="entry name" value="TR"/>
</dbReference>
<dbReference type="NCBIfam" id="NF005559">
    <property type="entry name" value="PRK07231.1"/>
    <property type="match status" value="1"/>
</dbReference>
<dbReference type="NCBIfam" id="NF006693">
    <property type="entry name" value="PRK09242.1"/>
    <property type="match status" value="1"/>
</dbReference>
<dbReference type="PANTHER" id="PTHR42898:SF6">
    <property type="entry name" value="NADP-DEPENDENT MANNITOL DEHYDROGENASE"/>
    <property type="match status" value="1"/>
</dbReference>
<dbReference type="PANTHER" id="PTHR42898">
    <property type="entry name" value="TROPINONE REDUCTASE"/>
    <property type="match status" value="1"/>
</dbReference>
<dbReference type="Pfam" id="PF13561">
    <property type="entry name" value="adh_short_C2"/>
    <property type="match status" value="1"/>
</dbReference>
<dbReference type="PRINTS" id="PR00081">
    <property type="entry name" value="GDHRDH"/>
</dbReference>
<dbReference type="PRINTS" id="PR00080">
    <property type="entry name" value="SDRFAMILY"/>
</dbReference>
<dbReference type="SUPFAM" id="SSF51735">
    <property type="entry name" value="NAD(P)-binding Rossmann-fold domains"/>
    <property type="match status" value="1"/>
</dbReference>
<dbReference type="PROSITE" id="PS00061">
    <property type="entry name" value="ADH_SHORT"/>
    <property type="match status" value="1"/>
</dbReference>
<gene>
    <name evidence="4" type="ordered locus">At5g06060</name>
    <name evidence="5" type="ORF">K16F4.2</name>
</gene>
<reference key="1">
    <citation type="submission" date="2000-05" db="EMBL/GenBank/DDBJ databases">
        <title>Structural analysis of Arabidopsis thaliana chromosome 5. XI.</title>
        <authorList>
            <person name="Kaneko T."/>
            <person name="Katoh T."/>
            <person name="Asamizu E."/>
            <person name="Sato S."/>
            <person name="Nakamura Y."/>
            <person name="Kotani H."/>
            <person name="Tabata S."/>
        </authorList>
    </citation>
    <scope>NUCLEOTIDE SEQUENCE [LARGE SCALE GENOMIC DNA]</scope>
    <source>
        <strain>cv. Columbia</strain>
    </source>
</reference>
<reference key="2">
    <citation type="journal article" date="2017" name="Plant J.">
        <title>Araport11: a complete reannotation of the Arabidopsis thaliana reference genome.</title>
        <authorList>
            <person name="Cheng C.Y."/>
            <person name="Krishnakumar V."/>
            <person name="Chan A.P."/>
            <person name="Thibaud-Nissen F."/>
            <person name="Schobel S."/>
            <person name="Town C.D."/>
        </authorList>
    </citation>
    <scope>GENOME REANNOTATION</scope>
    <source>
        <strain>cv. Columbia</strain>
    </source>
</reference>
<reference key="3">
    <citation type="journal article" date="2003" name="Science">
        <title>Empirical analysis of transcriptional activity in the Arabidopsis genome.</title>
        <authorList>
            <person name="Yamada K."/>
            <person name="Lim J."/>
            <person name="Dale J.M."/>
            <person name="Chen H."/>
            <person name="Shinn P."/>
            <person name="Palm C.J."/>
            <person name="Southwick A.M."/>
            <person name="Wu H.C."/>
            <person name="Kim C.J."/>
            <person name="Nguyen M."/>
            <person name="Pham P.K."/>
            <person name="Cheuk R.F."/>
            <person name="Karlin-Newmann G."/>
            <person name="Liu S.X."/>
            <person name="Lam B."/>
            <person name="Sakano H."/>
            <person name="Wu T."/>
            <person name="Yu G."/>
            <person name="Miranda M."/>
            <person name="Quach H.L."/>
            <person name="Tripp M."/>
            <person name="Chang C.H."/>
            <person name="Lee J.M."/>
            <person name="Toriumi M.J."/>
            <person name="Chan M.M."/>
            <person name="Tang C.C."/>
            <person name="Onodera C.S."/>
            <person name="Deng J.M."/>
            <person name="Akiyama K."/>
            <person name="Ansari Y."/>
            <person name="Arakawa T."/>
            <person name="Banh J."/>
            <person name="Banno F."/>
            <person name="Bowser L."/>
            <person name="Brooks S.Y."/>
            <person name="Carninci P."/>
            <person name="Chao Q."/>
            <person name="Choy N."/>
            <person name="Enju A."/>
            <person name="Goldsmith A.D."/>
            <person name="Gurjal M."/>
            <person name="Hansen N.F."/>
            <person name="Hayashizaki Y."/>
            <person name="Johnson-Hopson C."/>
            <person name="Hsuan V.W."/>
            <person name="Iida K."/>
            <person name="Karnes M."/>
            <person name="Khan S."/>
            <person name="Koesema E."/>
            <person name="Ishida J."/>
            <person name="Jiang P.X."/>
            <person name="Jones T."/>
            <person name="Kawai J."/>
            <person name="Kamiya A."/>
            <person name="Meyers C."/>
            <person name="Nakajima M."/>
            <person name="Narusaka M."/>
            <person name="Seki M."/>
            <person name="Sakurai T."/>
            <person name="Satou M."/>
            <person name="Tamse R."/>
            <person name="Vaysberg M."/>
            <person name="Wallender E.K."/>
            <person name="Wong C."/>
            <person name="Yamamura Y."/>
            <person name="Yuan S."/>
            <person name="Shinozaki K."/>
            <person name="Davis R.W."/>
            <person name="Theologis A."/>
            <person name="Ecker J.R."/>
        </authorList>
    </citation>
    <scope>NUCLEOTIDE SEQUENCE [LARGE SCALE MRNA]</scope>
    <source>
        <strain>cv. Columbia</strain>
    </source>
</reference>
<reference key="4">
    <citation type="submission" date="2002-03" db="EMBL/GenBank/DDBJ databases">
        <title>Full-length cDNA from Arabidopsis thaliana.</title>
        <authorList>
            <person name="Brover V.V."/>
            <person name="Troukhan M.E."/>
            <person name="Alexandrov N.A."/>
            <person name="Lu Y.-P."/>
            <person name="Flavell R.B."/>
            <person name="Feldmann K.A."/>
        </authorList>
    </citation>
    <scope>NUCLEOTIDE SEQUENCE [LARGE SCALE MRNA]</scope>
</reference>
<reference key="5">
    <citation type="journal article" date="2009" name="Chem. Biol. Interact.">
        <title>The SDR (short-chain dehydrogenase/reductase and related enzymes) nomenclature initiative.</title>
        <authorList>
            <person name="Persson B."/>
            <person name="Kallberg Y."/>
            <person name="Bray J.E."/>
            <person name="Bruford E."/>
            <person name="Dellaporta S.L."/>
            <person name="Favia A.D."/>
            <person name="Duarte R.G."/>
            <person name="Joernvall H."/>
            <person name="Kavanagh K.L."/>
            <person name="Kedishvili N."/>
            <person name="Kisiela M."/>
            <person name="Maser E."/>
            <person name="Mindnich R."/>
            <person name="Orchard S."/>
            <person name="Penning T.M."/>
            <person name="Thornton J.M."/>
            <person name="Adamski J."/>
            <person name="Oppermann U."/>
        </authorList>
    </citation>
    <scope>GENE FAMILY</scope>
    <scope>NOMENCLATURE</scope>
</reference>